<feature type="chain" id="PRO_0000235562" description="Aspartate--tRNA ligase">
    <location>
        <begin position="1"/>
        <end position="588"/>
    </location>
</feature>
<feature type="region of interest" description="Aspartate" evidence="1">
    <location>
        <begin position="201"/>
        <end position="204"/>
    </location>
</feature>
<feature type="binding site" evidence="1">
    <location>
        <position position="177"/>
    </location>
    <ligand>
        <name>L-aspartate</name>
        <dbReference type="ChEBI" id="CHEBI:29991"/>
    </ligand>
</feature>
<feature type="binding site" evidence="1">
    <location>
        <begin position="223"/>
        <end position="225"/>
    </location>
    <ligand>
        <name>ATP</name>
        <dbReference type="ChEBI" id="CHEBI:30616"/>
    </ligand>
</feature>
<feature type="binding site" evidence="1">
    <location>
        <position position="223"/>
    </location>
    <ligand>
        <name>L-aspartate</name>
        <dbReference type="ChEBI" id="CHEBI:29991"/>
    </ligand>
</feature>
<feature type="binding site" evidence="1">
    <location>
        <position position="232"/>
    </location>
    <ligand>
        <name>ATP</name>
        <dbReference type="ChEBI" id="CHEBI:30616"/>
    </ligand>
</feature>
<feature type="binding site" evidence="1">
    <location>
        <position position="451"/>
    </location>
    <ligand>
        <name>L-aspartate</name>
        <dbReference type="ChEBI" id="CHEBI:29991"/>
    </ligand>
</feature>
<feature type="binding site" evidence="1">
    <location>
        <position position="485"/>
    </location>
    <ligand>
        <name>ATP</name>
        <dbReference type="ChEBI" id="CHEBI:30616"/>
    </ligand>
</feature>
<feature type="binding site" evidence="1">
    <location>
        <position position="492"/>
    </location>
    <ligand>
        <name>L-aspartate</name>
        <dbReference type="ChEBI" id="CHEBI:29991"/>
    </ligand>
</feature>
<feature type="binding site" evidence="1">
    <location>
        <begin position="537"/>
        <end position="540"/>
    </location>
    <ligand>
        <name>ATP</name>
        <dbReference type="ChEBI" id="CHEBI:30616"/>
    </ligand>
</feature>
<dbReference type="EC" id="6.1.1.12" evidence="1"/>
<dbReference type="EMBL" id="AP006716">
    <property type="protein sequence ID" value="BAE04600.1"/>
    <property type="molecule type" value="Genomic_DNA"/>
</dbReference>
<dbReference type="RefSeq" id="WP_011275589.1">
    <property type="nucleotide sequence ID" value="NC_007168.1"/>
</dbReference>
<dbReference type="SMR" id="Q4L6X5"/>
<dbReference type="GeneID" id="93780693"/>
<dbReference type="KEGG" id="sha:SH1291"/>
<dbReference type="eggNOG" id="COG0173">
    <property type="taxonomic scope" value="Bacteria"/>
</dbReference>
<dbReference type="HOGENOM" id="CLU_014330_3_2_9"/>
<dbReference type="OrthoDB" id="9802326at2"/>
<dbReference type="Proteomes" id="UP000000543">
    <property type="component" value="Chromosome"/>
</dbReference>
<dbReference type="GO" id="GO:0005737">
    <property type="term" value="C:cytoplasm"/>
    <property type="evidence" value="ECO:0007669"/>
    <property type="project" value="UniProtKB-SubCell"/>
</dbReference>
<dbReference type="GO" id="GO:0004815">
    <property type="term" value="F:aspartate-tRNA ligase activity"/>
    <property type="evidence" value="ECO:0007669"/>
    <property type="project" value="UniProtKB-UniRule"/>
</dbReference>
<dbReference type="GO" id="GO:0005524">
    <property type="term" value="F:ATP binding"/>
    <property type="evidence" value="ECO:0007669"/>
    <property type="project" value="UniProtKB-UniRule"/>
</dbReference>
<dbReference type="GO" id="GO:0140096">
    <property type="term" value="F:catalytic activity, acting on a protein"/>
    <property type="evidence" value="ECO:0007669"/>
    <property type="project" value="UniProtKB-ARBA"/>
</dbReference>
<dbReference type="GO" id="GO:0003676">
    <property type="term" value="F:nucleic acid binding"/>
    <property type="evidence" value="ECO:0007669"/>
    <property type="project" value="InterPro"/>
</dbReference>
<dbReference type="GO" id="GO:0016740">
    <property type="term" value="F:transferase activity"/>
    <property type="evidence" value="ECO:0007669"/>
    <property type="project" value="UniProtKB-ARBA"/>
</dbReference>
<dbReference type="GO" id="GO:0006422">
    <property type="term" value="P:aspartyl-tRNA aminoacylation"/>
    <property type="evidence" value="ECO:0007669"/>
    <property type="project" value="UniProtKB-UniRule"/>
</dbReference>
<dbReference type="CDD" id="cd00777">
    <property type="entry name" value="AspRS_core"/>
    <property type="match status" value="1"/>
</dbReference>
<dbReference type="CDD" id="cd04317">
    <property type="entry name" value="EcAspRS_like_N"/>
    <property type="match status" value="1"/>
</dbReference>
<dbReference type="Gene3D" id="3.30.930.10">
    <property type="entry name" value="Bira Bifunctional Protein, Domain 2"/>
    <property type="match status" value="1"/>
</dbReference>
<dbReference type="Gene3D" id="3.30.1360.30">
    <property type="entry name" value="GAD-like domain"/>
    <property type="match status" value="1"/>
</dbReference>
<dbReference type="Gene3D" id="2.40.50.140">
    <property type="entry name" value="Nucleic acid-binding proteins"/>
    <property type="match status" value="1"/>
</dbReference>
<dbReference type="HAMAP" id="MF_00044">
    <property type="entry name" value="Asp_tRNA_synth_type1"/>
    <property type="match status" value="1"/>
</dbReference>
<dbReference type="InterPro" id="IPR004364">
    <property type="entry name" value="Aa-tRNA-synt_II"/>
</dbReference>
<dbReference type="InterPro" id="IPR006195">
    <property type="entry name" value="aa-tRNA-synth_II"/>
</dbReference>
<dbReference type="InterPro" id="IPR045864">
    <property type="entry name" value="aa-tRNA-synth_II/BPL/LPL"/>
</dbReference>
<dbReference type="InterPro" id="IPR004524">
    <property type="entry name" value="Asp-tRNA-ligase_1"/>
</dbReference>
<dbReference type="InterPro" id="IPR047089">
    <property type="entry name" value="Asp-tRNA-ligase_1_N"/>
</dbReference>
<dbReference type="InterPro" id="IPR002312">
    <property type="entry name" value="Asp/Asn-tRNA-synth_IIb"/>
</dbReference>
<dbReference type="InterPro" id="IPR047090">
    <property type="entry name" value="AspRS_core"/>
</dbReference>
<dbReference type="InterPro" id="IPR004115">
    <property type="entry name" value="GAD-like_sf"/>
</dbReference>
<dbReference type="InterPro" id="IPR029351">
    <property type="entry name" value="GAD_dom"/>
</dbReference>
<dbReference type="InterPro" id="IPR012340">
    <property type="entry name" value="NA-bd_OB-fold"/>
</dbReference>
<dbReference type="InterPro" id="IPR004365">
    <property type="entry name" value="NA-bd_OB_tRNA"/>
</dbReference>
<dbReference type="NCBIfam" id="TIGR00459">
    <property type="entry name" value="aspS_bact"/>
    <property type="match status" value="1"/>
</dbReference>
<dbReference type="NCBIfam" id="NF001750">
    <property type="entry name" value="PRK00476.1"/>
    <property type="match status" value="1"/>
</dbReference>
<dbReference type="PANTHER" id="PTHR22594:SF5">
    <property type="entry name" value="ASPARTATE--TRNA LIGASE, MITOCHONDRIAL"/>
    <property type="match status" value="1"/>
</dbReference>
<dbReference type="PANTHER" id="PTHR22594">
    <property type="entry name" value="ASPARTYL/LYSYL-TRNA SYNTHETASE"/>
    <property type="match status" value="1"/>
</dbReference>
<dbReference type="Pfam" id="PF02938">
    <property type="entry name" value="GAD"/>
    <property type="match status" value="1"/>
</dbReference>
<dbReference type="Pfam" id="PF00152">
    <property type="entry name" value="tRNA-synt_2"/>
    <property type="match status" value="1"/>
</dbReference>
<dbReference type="Pfam" id="PF01336">
    <property type="entry name" value="tRNA_anti-codon"/>
    <property type="match status" value="1"/>
</dbReference>
<dbReference type="PRINTS" id="PR01042">
    <property type="entry name" value="TRNASYNTHASP"/>
</dbReference>
<dbReference type="SUPFAM" id="SSF55681">
    <property type="entry name" value="Class II aaRS and biotin synthetases"/>
    <property type="match status" value="1"/>
</dbReference>
<dbReference type="SUPFAM" id="SSF55261">
    <property type="entry name" value="GAD domain-like"/>
    <property type="match status" value="1"/>
</dbReference>
<dbReference type="SUPFAM" id="SSF50249">
    <property type="entry name" value="Nucleic acid-binding proteins"/>
    <property type="match status" value="1"/>
</dbReference>
<dbReference type="PROSITE" id="PS50862">
    <property type="entry name" value="AA_TRNA_LIGASE_II"/>
    <property type="match status" value="1"/>
</dbReference>
<sequence length="588" mass="66728">MSKRTTYCGLVTEELLNQKVTLKGWVHNRRDLGGLIFVDLRDREGIVQIVFNPDFSEEALSVAETVRSEYVVEVEGTVTKRDPDTVNSKIKTGQVEVQVSNISIINKSETPPFSINEENQNVDENIRLKYRYLDLRRPELAQTFKMRHQTTRAIREYLDNNGFFDIETPVLTKSTPEGARDYLVPSRVHEGEFYALPQSPQLFKQLLMISGFDKYYQIVKCFRDEDLRADRQPEFTQVDIEMSFVDQEDVIQMGEEMLRKVVKDVKGIDVSGPFPRMTYEEAMRRYGSDKPDTRFEMELKDVSQLGREMDFKVFKDTVENNGEVKAIVAKGAADNYTRKDMDALTEFVNIYGAKGLAWVKVVDDGLSGPIARFFEDSNVATLKDLTQAESGDLVMFVADKPNVVAQSLGALRIKIAKELGLIDENKLNFLWVTDWPLLEYDEDAKRYVAAHHPFTSPKQEDISKLDSEPQNAQANAYDIVLNGYELGGGSIRIADGELQEKMFEVLGFTKEQAREQFGFLLDAFKYGAPPHGGIALGLDRLVMLLTNRTNLRDTIAFPKTASATCLLTDAPGEVSDKQLEELSLRIRH</sequence>
<reference key="1">
    <citation type="journal article" date="2005" name="J. Bacteriol.">
        <title>Whole-genome sequencing of Staphylococcus haemolyticus uncovers the extreme plasticity of its genome and the evolution of human-colonizing staphylococcal species.</title>
        <authorList>
            <person name="Takeuchi F."/>
            <person name="Watanabe S."/>
            <person name="Baba T."/>
            <person name="Yuzawa H."/>
            <person name="Ito T."/>
            <person name="Morimoto Y."/>
            <person name="Kuroda M."/>
            <person name="Cui L."/>
            <person name="Takahashi M."/>
            <person name="Ankai A."/>
            <person name="Baba S."/>
            <person name="Fukui S."/>
            <person name="Lee J.C."/>
            <person name="Hiramatsu K."/>
        </authorList>
    </citation>
    <scope>NUCLEOTIDE SEQUENCE [LARGE SCALE GENOMIC DNA]</scope>
    <source>
        <strain>JCSC1435</strain>
    </source>
</reference>
<accession>Q4L6X5</accession>
<comment type="function">
    <text evidence="1">Catalyzes the attachment of L-aspartate to tRNA(Asp) in a two-step reaction: L-aspartate is first activated by ATP to form Asp-AMP and then transferred to the acceptor end of tRNA(Asp).</text>
</comment>
<comment type="catalytic activity">
    <reaction evidence="1">
        <text>tRNA(Asp) + L-aspartate + ATP = L-aspartyl-tRNA(Asp) + AMP + diphosphate</text>
        <dbReference type="Rhea" id="RHEA:19649"/>
        <dbReference type="Rhea" id="RHEA-COMP:9660"/>
        <dbReference type="Rhea" id="RHEA-COMP:9678"/>
        <dbReference type="ChEBI" id="CHEBI:29991"/>
        <dbReference type="ChEBI" id="CHEBI:30616"/>
        <dbReference type="ChEBI" id="CHEBI:33019"/>
        <dbReference type="ChEBI" id="CHEBI:78442"/>
        <dbReference type="ChEBI" id="CHEBI:78516"/>
        <dbReference type="ChEBI" id="CHEBI:456215"/>
        <dbReference type="EC" id="6.1.1.12"/>
    </reaction>
</comment>
<comment type="subunit">
    <text evidence="1">Homodimer.</text>
</comment>
<comment type="subcellular location">
    <subcellularLocation>
        <location evidence="1">Cytoplasm</location>
    </subcellularLocation>
</comment>
<comment type="similarity">
    <text evidence="1">Belongs to the class-II aminoacyl-tRNA synthetase family. Type 1 subfamily.</text>
</comment>
<keyword id="KW-0030">Aminoacyl-tRNA synthetase</keyword>
<keyword id="KW-0067">ATP-binding</keyword>
<keyword id="KW-0963">Cytoplasm</keyword>
<keyword id="KW-0436">Ligase</keyword>
<keyword id="KW-0547">Nucleotide-binding</keyword>
<keyword id="KW-0648">Protein biosynthesis</keyword>
<evidence type="ECO:0000255" key="1">
    <source>
        <dbReference type="HAMAP-Rule" id="MF_00044"/>
    </source>
</evidence>
<protein>
    <recommendedName>
        <fullName evidence="1">Aspartate--tRNA ligase</fullName>
        <ecNumber evidence="1">6.1.1.12</ecNumber>
    </recommendedName>
    <alternativeName>
        <fullName evidence="1">Aspartyl-tRNA synthetase</fullName>
        <shortName evidence="1">AspRS</shortName>
    </alternativeName>
</protein>
<gene>
    <name evidence="1" type="primary">aspS</name>
    <name type="ordered locus">SH1291</name>
</gene>
<organism>
    <name type="scientific">Staphylococcus haemolyticus (strain JCSC1435)</name>
    <dbReference type="NCBI Taxonomy" id="279808"/>
    <lineage>
        <taxon>Bacteria</taxon>
        <taxon>Bacillati</taxon>
        <taxon>Bacillota</taxon>
        <taxon>Bacilli</taxon>
        <taxon>Bacillales</taxon>
        <taxon>Staphylococcaceae</taxon>
        <taxon>Staphylococcus</taxon>
    </lineage>
</organism>
<name>SYD_STAHJ</name>
<proteinExistence type="inferred from homology"/>